<comment type="function">
    <text>Cytochrome b5 is a membrane-bound hemoprotein functioning as an electron carrier for several membrane-bound oxygenases.</text>
</comment>
<comment type="subunit">
    <text evidence="1">Component of a complex composed of cytochrome b5, NADH-cytochrome b5 reductase (CYB5R3) and MTARC2.</text>
</comment>
<comment type="subcellular location">
    <subcellularLocation>
        <location evidence="6">Mitochondrion outer membrane</location>
    </subcellularLocation>
</comment>
<comment type="similarity">
    <text evidence="7">Belongs to the cytochrome b5 family.</text>
</comment>
<feature type="propeptide" id="PRO_0000006477" evidence="6">
    <location>
        <begin position="1"/>
        <end position="11"/>
    </location>
</feature>
<feature type="chain" id="PRO_0000006478" description="Cytochrome b5 type B">
    <location>
        <begin position="12"/>
        <end position="146"/>
    </location>
</feature>
<feature type="transmembrane region" description="Helical" evidence="4">
    <location>
        <begin position="119"/>
        <end position="136"/>
    </location>
</feature>
<feature type="domain" description="Cytochrome b5 heme-binding" evidence="5">
    <location>
        <begin position="20"/>
        <end position="96"/>
    </location>
</feature>
<feature type="binding site" description="axial binding residue">
    <location>
        <position position="55"/>
    </location>
    <ligand>
        <name>heme</name>
        <dbReference type="ChEBI" id="CHEBI:30413"/>
    </ligand>
    <ligandPart>
        <name>Fe</name>
        <dbReference type="ChEBI" id="CHEBI:18248"/>
    </ligandPart>
</feature>
<feature type="binding site" description="axial binding residue">
    <location>
        <position position="79"/>
    </location>
    <ligand>
        <name>heme</name>
        <dbReference type="ChEBI" id="CHEBI:30413"/>
    </ligand>
    <ligandPart>
        <name>Fe</name>
        <dbReference type="ChEBI" id="CHEBI:18248"/>
    </ligandPart>
</feature>
<feature type="modified residue" description="N6-acetyllysine" evidence="2">
    <location>
        <position position="30"/>
    </location>
</feature>
<feature type="modified residue" description="Phosphoserine" evidence="3">
    <location>
        <position position="80"/>
    </location>
</feature>
<feature type="sequence conflict" description="In Ref. 3; AA sequence." evidence="7" ref="3">
    <original>N</original>
    <variation>D</variation>
    <location>
        <position position="12"/>
    </location>
</feature>
<feature type="helix" evidence="8">
    <location>
        <begin position="25"/>
        <end position="28"/>
    </location>
</feature>
<feature type="strand" evidence="8">
    <location>
        <begin position="36"/>
        <end position="41"/>
    </location>
</feature>
<feature type="strand" evidence="8">
    <location>
        <begin position="44"/>
        <end position="47"/>
    </location>
</feature>
<feature type="helix" evidence="8">
    <location>
        <begin position="49"/>
        <end position="51"/>
    </location>
</feature>
<feature type="turn" evidence="8">
    <location>
        <begin position="52"/>
        <end position="54"/>
    </location>
</feature>
<feature type="helix" evidence="8">
    <location>
        <begin position="60"/>
        <end position="63"/>
    </location>
</feature>
<feature type="turn" evidence="8">
    <location>
        <begin position="64"/>
        <end position="67"/>
    </location>
</feature>
<feature type="helix" evidence="8">
    <location>
        <begin position="71"/>
        <end position="77"/>
    </location>
</feature>
<feature type="helix" evidence="8">
    <location>
        <begin position="81"/>
        <end position="85"/>
    </location>
</feature>
<feature type="helix" evidence="8">
    <location>
        <begin position="86"/>
        <end position="89"/>
    </location>
</feature>
<feature type="strand" evidence="8">
    <location>
        <begin position="91"/>
        <end position="95"/>
    </location>
</feature>
<feature type="helix" evidence="8">
    <location>
        <begin position="97"/>
        <end position="99"/>
    </location>
</feature>
<gene>
    <name type="primary">Cyb5b</name>
    <name type="synonym">Cyb5m</name>
    <name type="synonym">Omb5</name>
</gene>
<protein>
    <recommendedName>
        <fullName>Cytochrome b5 type B</fullName>
    </recommendedName>
    <alternativeName>
        <fullName>Cytochrome b5 outer mitochondrial membrane isoform</fullName>
    </alternativeName>
</protein>
<organism>
    <name type="scientific">Rattus norvegicus</name>
    <name type="common">Rat</name>
    <dbReference type="NCBI Taxonomy" id="10116"/>
    <lineage>
        <taxon>Eukaryota</taxon>
        <taxon>Metazoa</taxon>
        <taxon>Chordata</taxon>
        <taxon>Craniata</taxon>
        <taxon>Vertebrata</taxon>
        <taxon>Euteleostomi</taxon>
        <taxon>Mammalia</taxon>
        <taxon>Eutheria</taxon>
        <taxon>Euarchontoglires</taxon>
        <taxon>Glires</taxon>
        <taxon>Rodentia</taxon>
        <taxon>Myomorpha</taxon>
        <taxon>Muroidea</taxon>
        <taxon>Muridae</taxon>
        <taxon>Murinae</taxon>
        <taxon>Rattus</taxon>
    </lineage>
</organism>
<evidence type="ECO:0000250" key="1"/>
<evidence type="ECO:0000250" key="2">
    <source>
        <dbReference type="UniProtKB" id="O43169"/>
    </source>
</evidence>
<evidence type="ECO:0000250" key="3">
    <source>
        <dbReference type="UniProtKB" id="Q9CQX2"/>
    </source>
</evidence>
<evidence type="ECO:0000255" key="4"/>
<evidence type="ECO:0000255" key="5">
    <source>
        <dbReference type="PROSITE-ProRule" id="PRU00279"/>
    </source>
</evidence>
<evidence type="ECO:0000269" key="6">
    <source>
    </source>
</evidence>
<evidence type="ECO:0000305" key="7"/>
<evidence type="ECO:0007829" key="8">
    <source>
        <dbReference type="PDB" id="4HIL"/>
    </source>
</evidence>
<name>CYB5B_RAT</name>
<accession>P04166</accession>
<accession>Q9QWG1</accession>
<reference key="1">
    <citation type="submission" date="1997-04" db="EMBL/GenBank/DDBJ databases">
        <title>Charged amino acids at the carboxy-terminal portions determine intracellular locations of two isoforms of cytochrome b5.</title>
        <authorList>
            <person name="Kuroda R."/>
            <person name="Ikenoue T."/>
            <person name="Honsho M."/>
            <person name="Tujimoto S."/>
            <person name="Miroma J."/>
            <person name="Ito A."/>
        </authorList>
    </citation>
    <scope>NUCLEOTIDE SEQUENCE [MRNA]</scope>
</reference>
<reference key="2">
    <citation type="journal article" date="2004" name="Genome Res.">
        <title>The status, quality, and expansion of the NIH full-length cDNA project: the Mammalian Gene Collection (MGC).</title>
        <authorList>
            <consortium name="The MGC Project Team"/>
        </authorList>
    </citation>
    <scope>NUCLEOTIDE SEQUENCE [LARGE SCALE MRNA]</scope>
    <source>
        <tissue>Heart</tissue>
    </source>
</reference>
<reference key="3">
    <citation type="journal article" date="1983" name="Eur. J. Biochem.">
        <title>Two homologous cytochromes b5 in a single cell.</title>
        <authorList>
            <person name="Lederer F."/>
            <person name="Ghrir R."/>
            <person name="Guiard B."/>
            <person name="Cortial S."/>
            <person name="Ito A."/>
        </authorList>
    </citation>
    <scope>PROTEIN SEQUENCE OF 12-103</scope>
    <scope>SUBCELLULAR LOCATION</scope>
</reference>
<reference key="4">
    <citation type="journal article" date="1996" name="Biochemistry">
        <title>13C NMR spectroscopic and X-ray crystallographic study of the role played by mitochondrial cytochrome b5 heme propionates in the electrostatic binding to cytochrome c.</title>
        <authorList>
            <person name="Rodriguez-Maranon M.J."/>
            <person name="Qiu F."/>
            <person name="Stark R.E."/>
            <person name="White S.P."/>
            <person name="Zhang X."/>
            <person name="Foundling S.I."/>
            <person name="Rodriguez V."/>
            <person name="Schilling C.L. III"/>
            <person name="Bunce R.A."/>
            <person name="Rivera M."/>
        </authorList>
    </citation>
    <scope>X-RAY CRYSTALLOGRAPHY (2.7 ANGSTROMS)</scope>
</reference>
<reference key="5">
    <citation type="journal article" date="1998" name="Biochemistry">
        <title>The reduction potential of cytochrome b5 is modulated by its exposed heme edge.</title>
        <authorList>
            <person name="Rivera M."/>
            <person name="Seetharaman R."/>
            <person name="Girdhar D."/>
            <person name="Wirtz M."/>
            <person name="Zhang X."/>
            <person name="Wang X."/>
            <person name="White S."/>
        </authorList>
    </citation>
    <scope>X-RAY CRYSTALLOGRAPHY (2.0 ANGSTROMS)</scope>
</reference>
<reference key="6">
    <citation type="journal article" date="2000" name="Faraday Discuss.">
        <title>Modulation of redox potential in electron transfer proteins: effects of complex formation on the active site microenvironment of cytochrome b5.</title>
        <authorList>
            <person name="Wirtz M."/>
            <person name="Oganesyan V."/>
            <person name="Zhang X."/>
            <person name="Studer J."/>
            <person name="Rivera M."/>
        </authorList>
    </citation>
    <scope>X-RAY CRYSTALLOGRAPHY (1.8 ANGSTROMS) OF 17-102</scope>
</reference>
<reference key="7">
    <citation type="journal article" date="2001" name="Biochemistry">
        <title>Probing the differences between rat liver outer mitochondrial membrane cytochrome b5 and microsomal cytochromes b5.</title>
        <authorList>
            <person name="Altuve A."/>
            <person name="Silchenko S."/>
            <person name="Lee K.-H."/>
            <person name="Kuczera K."/>
            <person name="Terzyan S."/>
            <person name="Zhang X."/>
            <person name="Benson D.R."/>
            <person name="Rivera M."/>
        </authorList>
    </citation>
    <scope>X-RAY CRYSTALLOGRAPHY (2.0 ANGSTROMS) OF 17-103</scope>
</reference>
<proteinExistence type="evidence at protein level"/>
<keyword id="KW-0002">3D-structure</keyword>
<keyword id="KW-0007">Acetylation</keyword>
<keyword id="KW-0903">Direct protein sequencing</keyword>
<keyword id="KW-0249">Electron transport</keyword>
<keyword id="KW-0349">Heme</keyword>
<keyword id="KW-0408">Iron</keyword>
<keyword id="KW-0472">Membrane</keyword>
<keyword id="KW-0479">Metal-binding</keyword>
<keyword id="KW-0496">Mitochondrion</keyword>
<keyword id="KW-1000">Mitochondrion outer membrane</keyword>
<keyword id="KW-0597">Phosphoprotein</keyword>
<keyword id="KW-1185">Reference proteome</keyword>
<keyword id="KW-0812">Transmembrane</keyword>
<keyword id="KW-1133">Transmembrane helix</keyword>
<keyword id="KW-0813">Transport</keyword>
<sequence>MATPEASGSGRNGQGSDPAVTYYRLEEVAKRNTAEETWMVIHGRVYDITRFLSEHPGGEEVLLEQAGADATESFEDVGHSPDAREMLKQYYIGDVHPNDLKPKDGDKDPSKNNSCQSSWAYWIVPIVGAILIGFLYRHFWADSKSS</sequence>
<dbReference type="EMBL" id="Y12517">
    <property type="protein sequence ID" value="CAA73117.1"/>
    <property type="molecule type" value="mRNA"/>
</dbReference>
<dbReference type="EMBL" id="BC072535">
    <property type="protein sequence ID" value="AAH72535.1"/>
    <property type="molecule type" value="mRNA"/>
</dbReference>
<dbReference type="RefSeq" id="NP_085075.1">
    <property type="nucleotide sequence ID" value="NM_030586.2"/>
</dbReference>
<dbReference type="PDB" id="1AWP">
    <property type="method" value="X-ray"/>
    <property type="resolution" value="2.00 A"/>
    <property type="chains" value="A/B=13-103"/>
</dbReference>
<dbReference type="PDB" id="1B5M">
    <property type="method" value="X-ray"/>
    <property type="resolution" value="2.70 A"/>
    <property type="chains" value="A=19-102"/>
</dbReference>
<dbReference type="PDB" id="1EUE">
    <property type="method" value="X-ray"/>
    <property type="resolution" value="1.80 A"/>
    <property type="chains" value="A/B=17-102"/>
</dbReference>
<dbReference type="PDB" id="1ICC">
    <property type="method" value="X-ray"/>
    <property type="resolution" value="2.00 A"/>
    <property type="chains" value="A/B/C/D=17-103"/>
</dbReference>
<dbReference type="PDB" id="1LJ0">
    <property type="method" value="X-ray"/>
    <property type="resolution" value="2.00 A"/>
    <property type="chains" value="A/B/C/D=12-103"/>
</dbReference>
<dbReference type="PDB" id="2I89">
    <property type="method" value="X-ray"/>
    <property type="resolution" value="2.10 A"/>
    <property type="chains" value="A/B/C/D=12-103"/>
</dbReference>
<dbReference type="PDB" id="3MUS">
    <property type="method" value="X-ray"/>
    <property type="resolution" value="2.00 A"/>
    <property type="chains" value="A/B=17-102"/>
</dbReference>
<dbReference type="PDB" id="4HIL">
    <property type="method" value="X-ray"/>
    <property type="resolution" value="1.25 A"/>
    <property type="chains" value="A/B=17-102"/>
</dbReference>
<dbReference type="PDBsum" id="1AWP"/>
<dbReference type="PDBsum" id="1B5M"/>
<dbReference type="PDBsum" id="1EUE"/>
<dbReference type="PDBsum" id="1ICC"/>
<dbReference type="PDBsum" id="1LJ0"/>
<dbReference type="PDBsum" id="2I89"/>
<dbReference type="PDBsum" id="3MUS"/>
<dbReference type="PDBsum" id="4HIL"/>
<dbReference type="BMRB" id="P04166"/>
<dbReference type="SMR" id="P04166"/>
<dbReference type="FunCoup" id="P04166">
    <property type="interactions" value="2770"/>
</dbReference>
<dbReference type="IntAct" id="P04166">
    <property type="interactions" value="1"/>
</dbReference>
<dbReference type="STRING" id="10116.ENSRNOP00000015006"/>
<dbReference type="iPTMnet" id="P04166"/>
<dbReference type="PhosphoSitePlus" id="P04166"/>
<dbReference type="SwissPalm" id="P04166"/>
<dbReference type="jPOST" id="P04166"/>
<dbReference type="PaxDb" id="10116-ENSRNOP00000015006"/>
<dbReference type="Ensembl" id="ENSRNOT00000099870.1">
    <property type="protein sequence ID" value="ENSRNOP00000093641.1"/>
    <property type="gene ID" value="ENSRNOG00000011142.8"/>
</dbReference>
<dbReference type="GeneID" id="80773"/>
<dbReference type="KEGG" id="rno:80773"/>
<dbReference type="UCSC" id="RGD:621551">
    <property type="organism name" value="rat"/>
</dbReference>
<dbReference type="AGR" id="RGD:621551"/>
<dbReference type="CTD" id="80777"/>
<dbReference type="RGD" id="621551">
    <property type="gene designation" value="Cyb5b"/>
</dbReference>
<dbReference type="eggNOG" id="KOG0537">
    <property type="taxonomic scope" value="Eukaryota"/>
</dbReference>
<dbReference type="GeneTree" id="ENSGT00940000155584"/>
<dbReference type="InParanoid" id="P04166"/>
<dbReference type="OMA" id="NTCKSYW"/>
<dbReference type="OrthoDB" id="260519at2759"/>
<dbReference type="PhylomeDB" id="P04166"/>
<dbReference type="TreeFam" id="TF314537"/>
<dbReference type="Reactome" id="R-RNO-1660661">
    <property type="pathway name" value="Sphingolipid de novo biosynthesis"/>
</dbReference>
<dbReference type="Reactome" id="R-RNO-203615">
    <property type="pathway name" value="eNOS activation"/>
</dbReference>
<dbReference type="Reactome" id="R-RNO-211945">
    <property type="pathway name" value="Phase I - Functionalization of compounds"/>
</dbReference>
<dbReference type="EvolutionaryTrace" id="P04166"/>
<dbReference type="PRO" id="PR:P04166"/>
<dbReference type="Proteomes" id="UP000002494">
    <property type="component" value="Chromosome 19"/>
</dbReference>
<dbReference type="Bgee" id="ENSRNOG00000011142">
    <property type="expression patterns" value="Expressed in duodenum and 20 other cell types or tissues"/>
</dbReference>
<dbReference type="GO" id="GO:0043231">
    <property type="term" value="C:intracellular membrane-bounded organelle"/>
    <property type="evidence" value="ECO:0000318"/>
    <property type="project" value="GO_Central"/>
</dbReference>
<dbReference type="GO" id="GO:0005741">
    <property type="term" value="C:mitochondrial outer membrane"/>
    <property type="evidence" value="ECO:0000314"/>
    <property type="project" value="UniProtKB"/>
</dbReference>
<dbReference type="GO" id="GO:1903958">
    <property type="term" value="C:nitric-oxide synthase complex"/>
    <property type="evidence" value="ECO:0000266"/>
    <property type="project" value="RGD"/>
</dbReference>
<dbReference type="GO" id="GO:0008047">
    <property type="term" value="F:enzyme activator activity"/>
    <property type="evidence" value="ECO:0000314"/>
    <property type="project" value="RGD"/>
</dbReference>
<dbReference type="GO" id="GO:0020037">
    <property type="term" value="F:heme binding"/>
    <property type="evidence" value="ECO:0000266"/>
    <property type="project" value="RGD"/>
</dbReference>
<dbReference type="GO" id="GO:0046872">
    <property type="term" value="F:metal ion binding"/>
    <property type="evidence" value="ECO:0007669"/>
    <property type="project" value="UniProtKB-KW"/>
</dbReference>
<dbReference type="GO" id="GO:0008121">
    <property type="term" value="F:ubiquinol-cytochrome-c reductase activity"/>
    <property type="evidence" value="ECO:0000304"/>
    <property type="project" value="RGD"/>
</dbReference>
<dbReference type="GO" id="GO:0006809">
    <property type="term" value="P:nitric oxide biosynthetic process"/>
    <property type="evidence" value="ECO:0000266"/>
    <property type="project" value="RGD"/>
</dbReference>
<dbReference type="FunFam" id="3.10.120.10:FF:000002">
    <property type="entry name" value="Cytochrome b5 type B"/>
    <property type="match status" value="1"/>
</dbReference>
<dbReference type="Gene3D" id="3.10.120.10">
    <property type="entry name" value="Cytochrome b5-like heme/steroid binding domain"/>
    <property type="match status" value="1"/>
</dbReference>
<dbReference type="InterPro" id="IPR001199">
    <property type="entry name" value="Cyt_B5-like_heme/steroid-bd"/>
</dbReference>
<dbReference type="InterPro" id="IPR036400">
    <property type="entry name" value="Cyt_B5-like_heme/steroid_sf"/>
</dbReference>
<dbReference type="InterPro" id="IPR018506">
    <property type="entry name" value="Cyt_B5_heme-BS"/>
</dbReference>
<dbReference type="InterPro" id="IPR050668">
    <property type="entry name" value="Cytochrome_b5"/>
</dbReference>
<dbReference type="PANTHER" id="PTHR19359">
    <property type="entry name" value="CYTOCHROME B5"/>
    <property type="match status" value="1"/>
</dbReference>
<dbReference type="PANTHER" id="PTHR19359:SF95">
    <property type="entry name" value="CYTOCHROME B5 TYPE B"/>
    <property type="match status" value="1"/>
</dbReference>
<dbReference type="Pfam" id="PF00173">
    <property type="entry name" value="Cyt-b5"/>
    <property type="match status" value="1"/>
</dbReference>
<dbReference type="PRINTS" id="PR00363">
    <property type="entry name" value="CYTOCHROMEB5"/>
</dbReference>
<dbReference type="SMART" id="SM01117">
    <property type="entry name" value="Cyt-b5"/>
    <property type="match status" value="1"/>
</dbReference>
<dbReference type="SUPFAM" id="SSF55856">
    <property type="entry name" value="Cytochrome b5-like heme/steroid binding domain"/>
    <property type="match status" value="1"/>
</dbReference>
<dbReference type="PROSITE" id="PS00191">
    <property type="entry name" value="CYTOCHROME_B5_1"/>
    <property type="match status" value="1"/>
</dbReference>
<dbReference type="PROSITE" id="PS50255">
    <property type="entry name" value="CYTOCHROME_B5_2"/>
    <property type="match status" value="1"/>
</dbReference>